<feature type="chain" id="PRO_0000251732" description="PH and SEC7 domain-containing protein 4">
    <location>
        <begin position="1"/>
        <end position="1005"/>
    </location>
</feature>
<feature type="domain" description="SEC7" evidence="5">
    <location>
        <begin position="493"/>
        <end position="686"/>
    </location>
</feature>
<feature type="domain" description="PH" evidence="4">
    <location>
        <begin position="726"/>
        <end position="841"/>
    </location>
</feature>
<feature type="region of interest" description="Disordered" evidence="6">
    <location>
        <begin position="27"/>
        <end position="66"/>
    </location>
</feature>
<feature type="region of interest" description="Disordered" evidence="6">
    <location>
        <begin position="145"/>
        <end position="189"/>
    </location>
</feature>
<feature type="region of interest" description="Disordered" evidence="6">
    <location>
        <begin position="287"/>
        <end position="386"/>
    </location>
</feature>
<feature type="region of interest" description="Disordered" evidence="6">
    <location>
        <begin position="407"/>
        <end position="525"/>
    </location>
</feature>
<feature type="region of interest" description="Disordered" evidence="6">
    <location>
        <begin position="694"/>
        <end position="714"/>
    </location>
</feature>
<feature type="region of interest" description="Disordered" evidence="6">
    <location>
        <begin position="951"/>
        <end position="1005"/>
    </location>
</feature>
<feature type="coiled-coil region" evidence="3">
    <location>
        <begin position="870"/>
        <end position="926"/>
    </location>
</feature>
<feature type="compositionally biased region" description="Acidic residues" evidence="6">
    <location>
        <begin position="161"/>
        <end position="177"/>
    </location>
</feature>
<feature type="compositionally biased region" description="Low complexity" evidence="6">
    <location>
        <begin position="350"/>
        <end position="361"/>
    </location>
</feature>
<feature type="compositionally biased region" description="Low complexity" evidence="6">
    <location>
        <begin position="428"/>
        <end position="438"/>
    </location>
</feature>
<feature type="compositionally biased region" description="Basic and acidic residues" evidence="6">
    <location>
        <begin position="453"/>
        <end position="465"/>
    </location>
</feature>
<feature type="compositionally biased region" description="Basic and acidic residues" evidence="6">
    <location>
        <begin position="476"/>
        <end position="488"/>
    </location>
</feature>
<feature type="compositionally biased region" description="Basic residues" evidence="6">
    <location>
        <begin position="992"/>
        <end position="1005"/>
    </location>
</feature>
<feature type="modified residue" description="Phosphoserine" evidence="2">
    <location>
        <position position="85"/>
    </location>
</feature>
<feature type="modified residue" description="Phosphoserine" evidence="2">
    <location>
        <position position="88"/>
    </location>
</feature>
<feature type="modified residue" description="Phosphoserine" evidence="2">
    <location>
        <position position="97"/>
    </location>
</feature>
<feature type="modified residue" description="Phosphoserine" evidence="2">
    <location>
        <position position="381"/>
    </location>
</feature>
<feature type="modified residue" description="Phosphoserine" evidence="8">
    <location>
        <position position="435"/>
    </location>
</feature>
<feature type="modified residue" description="Phosphoserine" evidence="2">
    <location>
        <position position="968"/>
    </location>
</feature>
<feature type="modified residue" description="Phosphoserine" evidence="8">
    <location>
        <position position="971"/>
    </location>
</feature>
<feature type="sequence conflict" description="In Ref. 1; BAE41415." evidence="7" ref="1">
    <original>F</original>
    <variation>L</variation>
    <location>
        <position position="200"/>
    </location>
</feature>
<dbReference type="EMBL" id="AK043669">
    <property type="protein sequence ID" value="BAC31612.1"/>
    <property type="molecule type" value="mRNA"/>
</dbReference>
<dbReference type="EMBL" id="AK148489">
    <property type="protein sequence ID" value="BAE28582.1"/>
    <property type="molecule type" value="mRNA"/>
</dbReference>
<dbReference type="EMBL" id="AK150238">
    <property type="protein sequence ID" value="BAE29402.1"/>
    <property type="status" value="ALT_INIT"/>
    <property type="molecule type" value="mRNA"/>
</dbReference>
<dbReference type="EMBL" id="AK163628">
    <property type="protein sequence ID" value="BAE37428.1"/>
    <property type="molecule type" value="mRNA"/>
</dbReference>
<dbReference type="EMBL" id="AK169859">
    <property type="protein sequence ID" value="BAE41415.1"/>
    <property type="molecule type" value="mRNA"/>
</dbReference>
<dbReference type="EMBL" id="AL732528">
    <property type="status" value="NOT_ANNOTATED_CDS"/>
    <property type="molecule type" value="Genomic_DNA"/>
</dbReference>
<dbReference type="EMBL" id="BC046518">
    <property type="protein sequence ID" value="AAH46518.1"/>
    <property type="molecule type" value="mRNA"/>
</dbReference>
<dbReference type="EMBL" id="BC068231">
    <property type="protein sequence ID" value="AAH68231.1"/>
    <property type="molecule type" value="mRNA"/>
</dbReference>
<dbReference type="CCDS" id="CCDS15737.1"/>
<dbReference type="RefSeq" id="NP_001342160.1">
    <property type="nucleotide sequence ID" value="NM_001355231.2"/>
</dbReference>
<dbReference type="RefSeq" id="NP_001342161.1">
    <property type="nucleotide sequence ID" value="NM_001355232.2"/>
</dbReference>
<dbReference type="RefSeq" id="NP_001421120.1">
    <property type="nucleotide sequence ID" value="NM_001434191.1"/>
</dbReference>
<dbReference type="RefSeq" id="NP_001421121.1">
    <property type="nucleotide sequence ID" value="NM_001434192.1"/>
</dbReference>
<dbReference type="RefSeq" id="NP_001421122.1">
    <property type="nucleotide sequence ID" value="NM_001434193.1"/>
</dbReference>
<dbReference type="RefSeq" id="NP_001421123.1">
    <property type="nucleotide sequence ID" value="NM_001434194.1"/>
</dbReference>
<dbReference type="RefSeq" id="NP_808279.1">
    <property type="nucleotide sequence ID" value="NM_177611.5"/>
</dbReference>
<dbReference type="RefSeq" id="XP_006497894.1">
    <property type="nucleotide sequence ID" value="XM_006497831.3"/>
</dbReference>
<dbReference type="RefSeq" id="XP_006497895.1">
    <property type="nucleotide sequence ID" value="XM_006497832.5"/>
</dbReference>
<dbReference type="RefSeq" id="XP_006497896.1">
    <property type="nucleotide sequence ID" value="XM_006497833.3"/>
</dbReference>
<dbReference type="RefSeq" id="XP_006497897.1">
    <property type="nucleotide sequence ID" value="XM_006497834.3"/>
</dbReference>
<dbReference type="RefSeq" id="XP_006497898.1">
    <property type="nucleotide sequence ID" value="XM_006497835.3"/>
</dbReference>
<dbReference type="RefSeq" id="XP_006497899.1">
    <property type="nucleotide sequence ID" value="XM_006497836.5"/>
</dbReference>
<dbReference type="RefSeq" id="XP_011237351.1">
    <property type="nucleotide sequence ID" value="XM_011239049.2"/>
</dbReference>
<dbReference type="RefSeq" id="XP_017172556.1">
    <property type="nucleotide sequence ID" value="XM_017317067.3"/>
</dbReference>
<dbReference type="RefSeq" id="XP_030105242.1">
    <property type="nucleotide sequence ID" value="XM_030249382.2"/>
</dbReference>
<dbReference type="SMR" id="Q8BLR5"/>
<dbReference type="BioGRID" id="229642">
    <property type="interactions" value="1"/>
</dbReference>
<dbReference type="FunCoup" id="Q8BLR5">
    <property type="interactions" value="296"/>
</dbReference>
<dbReference type="IntAct" id="Q8BLR5">
    <property type="interactions" value="1"/>
</dbReference>
<dbReference type="STRING" id="10090.ENSMUSP00000100006"/>
<dbReference type="GlyGen" id="Q8BLR5">
    <property type="glycosylation" value="1 site, 1 N-linked glycan (1 site)"/>
</dbReference>
<dbReference type="iPTMnet" id="Q8BLR5"/>
<dbReference type="PhosphoSitePlus" id="Q8BLR5"/>
<dbReference type="jPOST" id="Q8BLR5"/>
<dbReference type="PaxDb" id="10090-ENSMUSP00000062415"/>
<dbReference type="PeptideAtlas" id="Q8BLR5"/>
<dbReference type="ProteomicsDB" id="291539"/>
<dbReference type="Antibodypedia" id="47549">
    <property type="antibodies" value="60 antibodies from 17 providers"/>
</dbReference>
<dbReference type="DNASU" id="215632"/>
<dbReference type="Ensembl" id="ENSMUST00000056641.15">
    <property type="protein sequence ID" value="ENSMUSP00000062415.9"/>
    <property type="gene ID" value="ENSMUSG00000026979.17"/>
</dbReference>
<dbReference type="Ensembl" id="ENSMUST00000102942.8">
    <property type="protein sequence ID" value="ENSMUSP00000100006.2"/>
    <property type="gene ID" value="ENSMUSG00000026979.17"/>
</dbReference>
<dbReference type="Ensembl" id="ENSMUST00000166388.2">
    <property type="protein sequence ID" value="ENSMUSP00000132395.2"/>
    <property type="gene ID" value="ENSMUSG00000026979.17"/>
</dbReference>
<dbReference type="GeneID" id="215632"/>
<dbReference type="KEGG" id="mmu:215632"/>
<dbReference type="UCSC" id="uc008ioy.1">
    <property type="organism name" value="mouse"/>
</dbReference>
<dbReference type="AGR" id="MGI:2674093"/>
<dbReference type="CTD" id="23550"/>
<dbReference type="MGI" id="MGI:2674093">
    <property type="gene designation" value="Psd4"/>
</dbReference>
<dbReference type="VEuPathDB" id="HostDB:ENSMUSG00000026979"/>
<dbReference type="eggNOG" id="KOG0932">
    <property type="taxonomic scope" value="Eukaryota"/>
</dbReference>
<dbReference type="GeneTree" id="ENSGT00940000161976"/>
<dbReference type="HOGENOM" id="CLU_011021_2_0_1"/>
<dbReference type="InParanoid" id="Q8BLR5"/>
<dbReference type="OMA" id="AKEMTSW"/>
<dbReference type="OrthoDB" id="2157641at2759"/>
<dbReference type="PhylomeDB" id="Q8BLR5"/>
<dbReference type="TreeFam" id="TF319755"/>
<dbReference type="BioGRID-ORCS" id="215632">
    <property type="hits" value="5 hits in 77 CRISPR screens"/>
</dbReference>
<dbReference type="PRO" id="PR:Q8BLR5"/>
<dbReference type="Proteomes" id="UP000000589">
    <property type="component" value="Chromosome 2"/>
</dbReference>
<dbReference type="RNAct" id="Q8BLR5">
    <property type="molecule type" value="protein"/>
</dbReference>
<dbReference type="Bgee" id="ENSMUSG00000026979">
    <property type="expression patterns" value="Expressed in granulocyte and 111 other cell types or tissues"/>
</dbReference>
<dbReference type="ExpressionAtlas" id="Q8BLR5">
    <property type="expression patterns" value="baseline and differential"/>
</dbReference>
<dbReference type="GO" id="GO:0030054">
    <property type="term" value="C:cell junction"/>
    <property type="evidence" value="ECO:0007669"/>
    <property type="project" value="UniProtKB-ARBA"/>
</dbReference>
<dbReference type="GO" id="GO:0032587">
    <property type="term" value="C:ruffle membrane"/>
    <property type="evidence" value="ECO:0000250"/>
    <property type="project" value="UniProtKB"/>
</dbReference>
<dbReference type="GO" id="GO:0005085">
    <property type="term" value="F:guanyl-nucleotide exchange factor activity"/>
    <property type="evidence" value="ECO:0007669"/>
    <property type="project" value="UniProtKB-KW"/>
</dbReference>
<dbReference type="GO" id="GO:0008289">
    <property type="term" value="F:lipid binding"/>
    <property type="evidence" value="ECO:0007669"/>
    <property type="project" value="UniProtKB-KW"/>
</dbReference>
<dbReference type="GO" id="GO:0032012">
    <property type="term" value="P:regulation of ARF protein signal transduction"/>
    <property type="evidence" value="ECO:0007669"/>
    <property type="project" value="InterPro"/>
</dbReference>
<dbReference type="CDD" id="cd13295">
    <property type="entry name" value="PH_EFA6"/>
    <property type="match status" value="1"/>
</dbReference>
<dbReference type="CDD" id="cd00171">
    <property type="entry name" value="Sec7"/>
    <property type="match status" value="1"/>
</dbReference>
<dbReference type="FunFam" id="1.10.1000.11:FF:000004">
    <property type="entry name" value="PH and SEC7 domain-containing protein 2"/>
    <property type="match status" value="1"/>
</dbReference>
<dbReference type="FunFam" id="2.30.29.30:FF:000267">
    <property type="entry name" value="PH and SEC7 domain-containing protein 4"/>
    <property type="match status" value="1"/>
</dbReference>
<dbReference type="Gene3D" id="1.10.1000.11">
    <property type="entry name" value="Arf Nucleotide-binding Site Opener,domain 2"/>
    <property type="match status" value="1"/>
</dbReference>
<dbReference type="Gene3D" id="2.30.29.30">
    <property type="entry name" value="Pleckstrin-homology domain (PH domain)/Phosphotyrosine-binding domain (PTB)"/>
    <property type="match status" value="1"/>
</dbReference>
<dbReference type="InterPro" id="IPR011993">
    <property type="entry name" value="PH-like_dom_sf"/>
</dbReference>
<dbReference type="InterPro" id="IPR041681">
    <property type="entry name" value="PH_9"/>
</dbReference>
<dbReference type="InterPro" id="IPR001849">
    <property type="entry name" value="PH_domain"/>
</dbReference>
<dbReference type="InterPro" id="IPR023394">
    <property type="entry name" value="Sec7_C_sf"/>
</dbReference>
<dbReference type="InterPro" id="IPR000904">
    <property type="entry name" value="Sec7_dom"/>
</dbReference>
<dbReference type="InterPro" id="IPR035999">
    <property type="entry name" value="Sec7_dom_sf"/>
</dbReference>
<dbReference type="PANTHER" id="PTHR10663">
    <property type="entry name" value="GUANYL-NUCLEOTIDE EXCHANGE FACTOR"/>
    <property type="match status" value="1"/>
</dbReference>
<dbReference type="PANTHER" id="PTHR10663:SF338">
    <property type="entry name" value="PH AND SEC7 DOMAIN-CONTAINING PROTEIN 4"/>
    <property type="match status" value="1"/>
</dbReference>
<dbReference type="Pfam" id="PF15410">
    <property type="entry name" value="PH_9"/>
    <property type="match status" value="1"/>
</dbReference>
<dbReference type="Pfam" id="PF01369">
    <property type="entry name" value="Sec7"/>
    <property type="match status" value="1"/>
</dbReference>
<dbReference type="SMART" id="SM00233">
    <property type="entry name" value="PH"/>
    <property type="match status" value="1"/>
</dbReference>
<dbReference type="SMART" id="SM00222">
    <property type="entry name" value="Sec7"/>
    <property type="match status" value="1"/>
</dbReference>
<dbReference type="SUPFAM" id="SSF50729">
    <property type="entry name" value="PH domain-like"/>
    <property type="match status" value="1"/>
</dbReference>
<dbReference type="SUPFAM" id="SSF48425">
    <property type="entry name" value="Sec7 domain"/>
    <property type="match status" value="1"/>
</dbReference>
<dbReference type="PROSITE" id="PS50003">
    <property type="entry name" value="PH_DOMAIN"/>
    <property type="match status" value="1"/>
</dbReference>
<dbReference type="PROSITE" id="PS50190">
    <property type="entry name" value="SEC7"/>
    <property type="match status" value="1"/>
</dbReference>
<evidence type="ECO:0000250" key="1"/>
<evidence type="ECO:0000250" key="2">
    <source>
        <dbReference type="UniProtKB" id="Q8NDX1"/>
    </source>
</evidence>
<evidence type="ECO:0000255" key="3"/>
<evidence type="ECO:0000255" key="4">
    <source>
        <dbReference type="PROSITE-ProRule" id="PRU00145"/>
    </source>
</evidence>
<evidence type="ECO:0000255" key="5">
    <source>
        <dbReference type="PROSITE-ProRule" id="PRU00189"/>
    </source>
</evidence>
<evidence type="ECO:0000256" key="6">
    <source>
        <dbReference type="SAM" id="MobiDB-lite"/>
    </source>
</evidence>
<evidence type="ECO:0000305" key="7"/>
<evidence type="ECO:0007744" key="8">
    <source>
    </source>
</evidence>
<sequence>MMGDHLRPMECLNICLEDNLQPCPEAYPSEIHGHPGPSEPCQEHTCPFDPPESARPDAPHGNSGVESTHLENCLVQVQARQASASLRSLEDNSSLGSPQQNQSSSTQVVFWAGILQAQMCVLDLEEELEKTEGLRAELRCCIPPPSKDLLGDEGLSPSRPEEDEDSGDDSSGPEEENQTWPREKIPGSSLEWGAEEDSIFFDNPLFLESPCSDTSTEGECFSWGYPNSHPDMKTWHQSPQTLDSPLQKGTGLWRQENELDLGSDTADHGGCSTPPFPVPSYKMHPCLALGSTEGDPTVPPDQEGETSCEDDLGHGSPKAPFVDHELIQESDNFEFDLRPATTHPVQPWGSQTSQSLSDLTQPILEDLQREDPSRSQETLISQNRGERDAGCFQEPVFCTLAPWGSQTSLLEPNCPESEGRGSGPQPSPVSSQDSSPRVLLHSPKWPQDASHLLQKDRSELSSLKEEETEEVPSLRQEAECEDTSRSEDASANQHHVHLASAEGLPESPMPQAQSPEEGWRPSSSREKLANDIRNDKGAWNLALRLYQLNGFRKSEVAAHLRKNNDFSRAVAEAYLSFFQFEGQSLDRALRGFLQALVLSGETQERERILYQFSKRFHYCNPGAFPSVDSVHTLTCAIMLLNTDLHGQNIGKSMSCQEFVTNLNGLQDGRNFPKELLKALYWSIRSEKLEWAIDEEDADRPEKDQPSPSAGKISSPFLQMAQDPTMPTYKQGILARKMHHIADGKKTPWGKRGWKMFHTLLRGMVLYFLKGEGQWLDGESLVGHMVDEPVGVHHSLASPATHYTKKPHVFQLRTADWRLYLFQAPTAKEMASWIARINLAAATHSAPPFPAAVGSQRRFVRPILPMSPVQSSLEEQHRSHENCLDAASDDLLDLQRNLPERRGRSRELEEYRLRKEYLEHEKTRYETYVQLLVARLHFPLGDLALWEDQLGKETDGSQEPRPSLKKSHSSPSLHQEEAPTTAKVKRNISERRTYRKIIPKRNRNQL</sequence>
<comment type="function">
    <text evidence="1">Guanine nucleotide exchange factor for ARF6 and ARL14/ARF7. Through ARL14 activation, controls the movement of MHC class II-containing vesicles along the actin cytoskeleton in dendritic cells. Involved in membrane recycling. Interacts with several phosphatidylinositol phosphate species, including phosphatidylinositol 3,4-bisphosphate, phosphatidylinositol 3,5-bisphosphate and phosphatidylinositol 4,5-bisphosphate (By similarity).</text>
</comment>
<comment type="subcellular location">
    <subcellularLocation>
        <location evidence="2">Cell membrane</location>
    </subcellularLocation>
    <subcellularLocation>
        <location evidence="2">Cell projection</location>
        <location evidence="2">Ruffle membrane</location>
    </subcellularLocation>
    <text evidence="2">In interphase associated with the plasma membrane, in particular with membrane ruffling regions. Accumulates in dynamic actin-rich membrane ruffles and microvilli-like structures. Recruited to membranes via phosphatidylinositol phosphate-binding.</text>
</comment>
<comment type="sequence caution" evidence="7">
    <conflict type="erroneous initiation">
        <sequence resource="EMBL-CDS" id="BAE29402"/>
    </conflict>
</comment>
<name>PSD4_MOUSE</name>
<protein>
    <recommendedName>
        <fullName>PH and SEC7 domain-containing protein 4</fullName>
    </recommendedName>
    <alternativeName>
        <fullName>Exchange factor for ADP-ribosylation factor guanine nucleotide factor 6 B</fullName>
        <shortName>Exchange factor for ARF6 B</shortName>
    </alternativeName>
    <alternativeName>
        <fullName>Pleckstrin homology and SEC7 domain-containing protein 4</fullName>
    </alternativeName>
</protein>
<organism>
    <name type="scientific">Mus musculus</name>
    <name type="common">Mouse</name>
    <dbReference type="NCBI Taxonomy" id="10090"/>
    <lineage>
        <taxon>Eukaryota</taxon>
        <taxon>Metazoa</taxon>
        <taxon>Chordata</taxon>
        <taxon>Craniata</taxon>
        <taxon>Vertebrata</taxon>
        <taxon>Euteleostomi</taxon>
        <taxon>Mammalia</taxon>
        <taxon>Eutheria</taxon>
        <taxon>Euarchontoglires</taxon>
        <taxon>Glires</taxon>
        <taxon>Rodentia</taxon>
        <taxon>Myomorpha</taxon>
        <taxon>Muroidea</taxon>
        <taxon>Muridae</taxon>
        <taxon>Murinae</taxon>
        <taxon>Mus</taxon>
        <taxon>Mus</taxon>
    </lineage>
</organism>
<reference key="1">
    <citation type="journal article" date="2005" name="Science">
        <title>The transcriptional landscape of the mammalian genome.</title>
        <authorList>
            <person name="Carninci P."/>
            <person name="Kasukawa T."/>
            <person name="Katayama S."/>
            <person name="Gough J."/>
            <person name="Frith M.C."/>
            <person name="Maeda N."/>
            <person name="Oyama R."/>
            <person name="Ravasi T."/>
            <person name="Lenhard B."/>
            <person name="Wells C."/>
            <person name="Kodzius R."/>
            <person name="Shimokawa K."/>
            <person name="Bajic V.B."/>
            <person name="Brenner S.E."/>
            <person name="Batalov S."/>
            <person name="Forrest A.R."/>
            <person name="Zavolan M."/>
            <person name="Davis M.J."/>
            <person name="Wilming L.G."/>
            <person name="Aidinis V."/>
            <person name="Allen J.E."/>
            <person name="Ambesi-Impiombato A."/>
            <person name="Apweiler R."/>
            <person name="Aturaliya R.N."/>
            <person name="Bailey T.L."/>
            <person name="Bansal M."/>
            <person name="Baxter L."/>
            <person name="Beisel K.W."/>
            <person name="Bersano T."/>
            <person name="Bono H."/>
            <person name="Chalk A.M."/>
            <person name="Chiu K.P."/>
            <person name="Choudhary V."/>
            <person name="Christoffels A."/>
            <person name="Clutterbuck D.R."/>
            <person name="Crowe M.L."/>
            <person name="Dalla E."/>
            <person name="Dalrymple B.P."/>
            <person name="de Bono B."/>
            <person name="Della Gatta G."/>
            <person name="di Bernardo D."/>
            <person name="Down T."/>
            <person name="Engstrom P."/>
            <person name="Fagiolini M."/>
            <person name="Faulkner G."/>
            <person name="Fletcher C.F."/>
            <person name="Fukushima T."/>
            <person name="Furuno M."/>
            <person name="Futaki S."/>
            <person name="Gariboldi M."/>
            <person name="Georgii-Hemming P."/>
            <person name="Gingeras T.R."/>
            <person name="Gojobori T."/>
            <person name="Green R.E."/>
            <person name="Gustincich S."/>
            <person name="Harbers M."/>
            <person name="Hayashi Y."/>
            <person name="Hensch T.K."/>
            <person name="Hirokawa N."/>
            <person name="Hill D."/>
            <person name="Huminiecki L."/>
            <person name="Iacono M."/>
            <person name="Ikeo K."/>
            <person name="Iwama A."/>
            <person name="Ishikawa T."/>
            <person name="Jakt M."/>
            <person name="Kanapin A."/>
            <person name="Katoh M."/>
            <person name="Kawasawa Y."/>
            <person name="Kelso J."/>
            <person name="Kitamura H."/>
            <person name="Kitano H."/>
            <person name="Kollias G."/>
            <person name="Krishnan S.P."/>
            <person name="Kruger A."/>
            <person name="Kummerfeld S.K."/>
            <person name="Kurochkin I.V."/>
            <person name="Lareau L.F."/>
            <person name="Lazarevic D."/>
            <person name="Lipovich L."/>
            <person name="Liu J."/>
            <person name="Liuni S."/>
            <person name="McWilliam S."/>
            <person name="Madan Babu M."/>
            <person name="Madera M."/>
            <person name="Marchionni L."/>
            <person name="Matsuda H."/>
            <person name="Matsuzawa S."/>
            <person name="Miki H."/>
            <person name="Mignone F."/>
            <person name="Miyake S."/>
            <person name="Morris K."/>
            <person name="Mottagui-Tabar S."/>
            <person name="Mulder N."/>
            <person name="Nakano N."/>
            <person name="Nakauchi H."/>
            <person name="Ng P."/>
            <person name="Nilsson R."/>
            <person name="Nishiguchi S."/>
            <person name="Nishikawa S."/>
            <person name="Nori F."/>
            <person name="Ohara O."/>
            <person name="Okazaki Y."/>
            <person name="Orlando V."/>
            <person name="Pang K.C."/>
            <person name="Pavan W.J."/>
            <person name="Pavesi G."/>
            <person name="Pesole G."/>
            <person name="Petrovsky N."/>
            <person name="Piazza S."/>
            <person name="Reed J."/>
            <person name="Reid J.F."/>
            <person name="Ring B.Z."/>
            <person name="Ringwald M."/>
            <person name="Rost B."/>
            <person name="Ruan Y."/>
            <person name="Salzberg S.L."/>
            <person name="Sandelin A."/>
            <person name="Schneider C."/>
            <person name="Schoenbach C."/>
            <person name="Sekiguchi K."/>
            <person name="Semple C.A."/>
            <person name="Seno S."/>
            <person name="Sessa L."/>
            <person name="Sheng Y."/>
            <person name="Shibata Y."/>
            <person name="Shimada H."/>
            <person name="Shimada K."/>
            <person name="Silva D."/>
            <person name="Sinclair B."/>
            <person name="Sperling S."/>
            <person name="Stupka E."/>
            <person name="Sugiura K."/>
            <person name="Sultana R."/>
            <person name="Takenaka Y."/>
            <person name="Taki K."/>
            <person name="Tammoja K."/>
            <person name="Tan S.L."/>
            <person name="Tang S."/>
            <person name="Taylor M.S."/>
            <person name="Tegner J."/>
            <person name="Teichmann S.A."/>
            <person name="Ueda H.R."/>
            <person name="van Nimwegen E."/>
            <person name="Verardo R."/>
            <person name="Wei C.L."/>
            <person name="Yagi K."/>
            <person name="Yamanishi H."/>
            <person name="Zabarovsky E."/>
            <person name="Zhu S."/>
            <person name="Zimmer A."/>
            <person name="Hide W."/>
            <person name="Bult C."/>
            <person name="Grimmond S.M."/>
            <person name="Teasdale R.D."/>
            <person name="Liu E.T."/>
            <person name="Brusic V."/>
            <person name="Quackenbush J."/>
            <person name="Wahlestedt C."/>
            <person name="Mattick J.S."/>
            <person name="Hume D.A."/>
            <person name="Kai C."/>
            <person name="Sasaki D."/>
            <person name="Tomaru Y."/>
            <person name="Fukuda S."/>
            <person name="Kanamori-Katayama M."/>
            <person name="Suzuki M."/>
            <person name="Aoki J."/>
            <person name="Arakawa T."/>
            <person name="Iida J."/>
            <person name="Imamura K."/>
            <person name="Itoh M."/>
            <person name="Kato T."/>
            <person name="Kawaji H."/>
            <person name="Kawagashira N."/>
            <person name="Kawashima T."/>
            <person name="Kojima M."/>
            <person name="Kondo S."/>
            <person name="Konno H."/>
            <person name="Nakano K."/>
            <person name="Ninomiya N."/>
            <person name="Nishio T."/>
            <person name="Okada M."/>
            <person name="Plessy C."/>
            <person name="Shibata K."/>
            <person name="Shiraki T."/>
            <person name="Suzuki S."/>
            <person name="Tagami M."/>
            <person name="Waki K."/>
            <person name="Watahiki A."/>
            <person name="Okamura-Oho Y."/>
            <person name="Suzuki H."/>
            <person name="Kawai J."/>
            <person name="Hayashizaki Y."/>
        </authorList>
    </citation>
    <scope>NUCLEOTIDE SEQUENCE [LARGE SCALE MRNA]</scope>
    <source>
        <strain>C57BL/6J</strain>
        <strain>NOD</strain>
        <tissue>Bone marrow</tissue>
        <tissue>Brain cortex</tissue>
        <tissue>Pancreas</tissue>
        <tissue>Thymus</tissue>
    </source>
</reference>
<reference key="2">
    <citation type="journal article" date="2009" name="PLoS Biol.">
        <title>Lineage-specific biology revealed by a finished genome assembly of the mouse.</title>
        <authorList>
            <person name="Church D.M."/>
            <person name="Goodstadt L."/>
            <person name="Hillier L.W."/>
            <person name="Zody M.C."/>
            <person name="Goldstein S."/>
            <person name="She X."/>
            <person name="Bult C.J."/>
            <person name="Agarwala R."/>
            <person name="Cherry J.L."/>
            <person name="DiCuccio M."/>
            <person name="Hlavina W."/>
            <person name="Kapustin Y."/>
            <person name="Meric P."/>
            <person name="Maglott D."/>
            <person name="Birtle Z."/>
            <person name="Marques A.C."/>
            <person name="Graves T."/>
            <person name="Zhou S."/>
            <person name="Teague B."/>
            <person name="Potamousis K."/>
            <person name="Churas C."/>
            <person name="Place M."/>
            <person name="Herschleb J."/>
            <person name="Runnheim R."/>
            <person name="Forrest D."/>
            <person name="Amos-Landgraf J."/>
            <person name="Schwartz D.C."/>
            <person name="Cheng Z."/>
            <person name="Lindblad-Toh K."/>
            <person name="Eichler E.E."/>
            <person name="Ponting C.P."/>
        </authorList>
    </citation>
    <scope>NUCLEOTIDE SEQUENCE [LARGE SCALE GENOMIC DNA]</scope>
    <source>
        <strain>C57BL/6J</strain>
    </source>
</reference>
<reference key="3">
    <citation type="journal article" date="2004" name="Genome Res.">
        <title>The status, quality, and expansion of the NIH full-length cDNA project: the Mammalian Gene Collection (MGC).</title>
        <authorList>
            <consortium name="The MGC Project Team"/>
        </authorList>
    </citation>
    <scope>NUCLEOTIDE SEQUENCE [LARGE SCALE MRNA]</scope>
    <source>
        <strain>C57BL/6J</strain>
        <strain>FVB/N</strain>
        <tissue>Brain</tissue>
        <tissue>Mammary tumor</tissue>
    </source>
</reference>
<reference key="4">
    <citation type="journal article" date="2010" name="Cell">
        <title>A tissue-specific atlas of mouse protein phosphorylation and expression.</title>
        <authorList>
            <person name="Huttlin E.L."/>
            <person name="Jedrychowski M.P."/>
            <person name="Elias J.E."/>
            <person name="Goswami T."/>
            <person name="Rad R."/>
            <person name="Beausoleil S.A."/>
            <person name="Villen J."/>
            <person name="Haas W."/>
            <person name="Sowa M.E."/>
            <person name="Gygi S.P."/>
        </authorList>
    </citation>
    <scope>PHOSPHORYLATION [LARGE SCALE ANALYSIS] AT SER-435 AND SER-971</scope>
    <scope>IDENTIFICATION BY MASS SPECTROMETRY [LARGE SCALE ANALYSIS]</scope>
    <source>
        <tissue>Spleen</tissue>
    </source>
</reference>
<gene>
    <name type="primary">Psd4</name>
    <name type="synonym">Efa6b</name>
</gene>
<accession>Q8BLR5</accession>
<accession>A2AIU4</accession>
<accession>Q3TE33</accession>
<accession>Q3TQF5</accession>
<accession>Q3UD59</accession>
<accession>Q3UFH9</accession>
<accession>Q80V44</accession>
<proteinExistence type="evidence at protein level"/>
<keyword id="KW-1003">Cell membrane</keyword>
<keyword id="KW-0966">Cell projection</keyword>
<keyword id="KW-0175">Coiled coil</keyword>
<keyword id="KW-0344">Guanine-nucleotide releasing factor</keyword>
<keyword id="KW-0446">Lipid-binding</keyword>
<keyword id="KW-0472">Membrane</keyword>
<keyword id="KW-0597">Phosphoprotein</keyword>
<keyword id="KW-1185">Reference proteome</keyword>